<comment type="function">
    <text evidence="1">One of several proteins that assist in the late maturation steps of the functional core of the 30S ribosomal subunit. Associates with free 30S ribosomal subunits (but not with 30S subunits that are part of 70S ribosomes or polysomes). Required for efficient processing of 16S rRNA. May interact with the 5'-terminal helix region of 16S rRNA.</text>
</comment>
<comment type="subunit">
    <text evidence="1">Monomer. Binds 30S ribosomal subunits, but not 50S ribosomal subunits or 70S ribosomes.</text>
</comment>
<comment type="subcellular location">
    <subcellularLocation>
        <location evidence="1">Cytoplasm</location>
    </subcellularLocation>
</comment>
<comment type="similarity">
    <text evidence="1">Belongs to the RbfA family.</text>
</comment>
<name>RBFA_SHEPW</name>
<organism>
    <name type="scientific">Shewanella piezotolerans (strain WP3 / JCM 13877)</name>
    <dbReference type="NCBI Taxonomy" id="225849"/>
    <lineage>
        <taxon>Bacteria</taxon>
        <taxon>Pseudomonadati</taxon>
        <taxon>Pseudomonadota</taxon>
        <taxon>Gammaproteobacteria</taxon>
        <taxon>Alteromonadales</taxon>
        <taxon>Shewanellaceae</taxon>
        <taxon>Shewanella</taxon>
    </lineage>
</organism>
<sequence length="142" mass="16230">MAKEFSRTRRIAQQLQQELAVVLQRDMKDPRIGFVTVNDVDVSRDLSYAKVFVTFFEEDEKLVQEKVEALDAAAGYIRSLVAGRMKLRVMPELRFIYDSSLVEGMRMSNLVSRVISDDEAKQQEHGTVENAKQDGDKAEDDK</sequence>
<proteinExistence type="inferred from homology"/>
<feature type="chain" id="PRO_1000193272" description="Ribosome-binding factor A">
    <location>
        <begin position="1"/>
        <end position="142"/>
    </location>
</feature>
<feature type="region of interest" description="Disordered" evidence="2">
    <location>
        <begin position="118"/>
        <end position="142"/>
    </location>
</feature>
<protein>
    <recommendedName>
        <fullName evidence="1">Ribosome-binding factor A</fullName>
    </recommendedName>
</protein>
<gene>
    <name evidence="1" type="primary">rbfA</name>
    <name type="ordered locus">swp_1219</name>
</gene>
<evidence type="ECO:0000255" key="1">
    <source>
        <dbReference type="HAMAP-Rule" id="MF_00003"/>
    </source>
</evidence>
<evidence type="ECO:0000256" key="2">
    <source>
        <dbReference type="SAM" id="MobiDB-lite"/>
    </source>
</evidence>
<accession>B8CKH4</accession>
<keyword id="KW-0963">Cytoplasm</keyword>
<keyword id="KW-0690">Ribosome biogenesis</keyword>
<dbReference type="EMBL" id="CP000472">
    <property type="protein sequence ID" value="ACJ28013.1"/>
    <property type="molecule type" value="Genomic_DNA"/>
</dbReference>
<dbReference type="RefSeq" id="WP_020911391.1">
    <property type="nucleotide sequence ID" value="NC_011566.1"/>
</dbReference>
<dbReference type="SMR" id="B8CKH4"/>
<dbReference type="STRING" id="225849.swp_1219"/>
<dbReference type="KEGG" id="swp:swp_1219"/>
<dbReference type="eggNOG" id="COG0858">
    <property type="taxonomic scope" value="Bacteria"/>
</dbReference>
<dbReference type="HOGENOM" id="CLU_089475_5_0_6"/>
<dbReference type="OrthoDB" id="307788at2"/>
<dbReference type="Proteomes" id="UP000000753">
    <property type="component" value="Chromosome"/>
</dbReference>
<dbReference type="GO" id="GO:0005829">
    <property type="term" value="C:cytosol"/>
    <property type="evidence" value="ECO:0007669"/>
    <property type="project" value="TreeGrafter"/>
</dbReference>
<dbReference type="GO" id="GO:0043024">
    <property type="term" value="F:ribosomal small subunit binding"/>
    <property type="evidence" value="ECO:0007669"/>
    <property type="project" value="TreeGrafter"/>
</dbReference>
<dbReference type="GO" id="GO:0030490">
    <property type="term" value="P:maturation of SSU-rRNA"/>
    <property type="evidence" value="ECO:0007669"/>
    <property type="project" value="UniProtKB-UniRule"/>
</dbReference>
<dbReference type="FunFam" id="3.30.300.20:FF:000007">
    <property type="entry name" value="Ribosome-binding factor A"/>
    <property type="match status" value="1"/>
</dbReference>
<dbReference type="Gene3D" id="3.30.300.20">
    <property type="match status" value="1"/>
</dbReference>
<dbReference type="HAMAP" id="MF_00003">
    <property type="entry name" value="RbfA"/>
    <property type="match status" value="1"/>
</dbReference>
<dbReference type="InterPro" id="IPR015946">
    <property type="entry name" value="KH_dom-like_a/b"/>
</dbReference>
<dbReference type="InterPro" id="IPR000238">
    <property type="entry name" value="RbfA"/>
</dbReference>
<dbReference type="InterPro" id="IPR023799">
    <property type="entry name" value="RbfA_dom_sf"/>
</dbReference>
<dbReference type="InterPro" id="IPR020053">
    <property type="entry name" value="Ribosome-bd_factorA_CS"/>
</dbReference>
<dbReference type="NCBIfam" id="TIGR00082">
    <property type="entry name" value="rbfA"/>
    <property type="match status" value="1"/>
</dbReference>
<dbReference type="PANTHER" id="PTHR33515">
    <property type="entry name" value="RIBOSOME-BINDING FACTOR A, CHLOROPLASTIC-RELATED"/>
    <property type="match status" value="1"/>
</dbReference>
<dbReference type="PANTHER" id="PTHR33515:SF1">
    <property type="entry name" value="RIBOSOME-BINDING FACTOR A, CHLOROPLASTIC-RELATED"/>
    <property type="match status" value="1"/>
</dbReference>
<dbReference type="Pfam" id="PF02033">
    <property type="entry name" value="RBFA"/>
    <property type="match status" value="1"/>
</dbReference>
<dbReference type="SUPFAM" id="SSF89919">
    <property type="entry name" value="Ribosome-binding factor A, RbfA"/>
    <property type="match status" value="1"/>
</dbReference>
<dbReference type="PROSITE" id="PS01319">
    <property type="entry name" value="RBFA"/>
    <property type="match status" value="1"/>
</dbReference>
<reference key="1">
    <citation type="journal article" date="2008" name="PLoS ONE">
        <title>Environmental adaptation: genomic analysis of the piezotolerant and psychrotolerant deep-sea iron reducing bacterium Shewanella piezotolerans WP3.</title>
        <authorList>
            <person name="Wang F."/>
            <person name="Wang J."/>
            <person name="Jian H."/>
            <person name="Zhang B."/>
            <person name="Li S."/>
            <person name="Wang F."/>
            <person name="Zeng X."/>
            <person name="Gao L."/>
            <person name="Bartlett D.H."/>
            <person name="Yu J."/>
            <person name="Hu S."/>
            <person name="Xiao X."/>
        </authorList>
    </citation>
    <scope>NUCLEOTIDE SEQUENCE [LARGE SCALE GENOMIC DNA]</scope>
    <source>
        <strain>WP3 / JCM 13877</strain>
    </source>
</reference>